<proteinExistence type="inferred from homology"/>
<sequence length="196" mass="22694">MSRYRGPRLKKIRRLGALPGLTRKTPKSGSNLKKKFHSGKKEQYRIRLQEKQKLRFHYGLTERQLLRYVHIAGKAKKSTGQVLLQLLEMRLDNIVFRLGMASTIPGARQLVNHRHILVNGRIVDIPSFRCKPRDIITTKDNQRSKRLVQNSIASSDPGKLPKHLTVDTLQYKGLVQKILDRKWVGLKINELLVVEY</sequence>
<evidence type="ECO:0000250" key="1"/>
<evidence type="ECO:0000256" key="2">
    <source>
        <dbReference type="SAM" id="MobiDB-lite"/>
    </source>
</evidence>
<evidence type="ECO:0000305" key="3"/>
<name>RR4_TRARA</name>
<keyword id="KW-0150">Chloroplast</keyword>
<keyword id="KW-0934">Plastid</keyword>
<keyword id="KW-0687">Ribonucleoprotein</keyword>
<keyword id="KW-0689">Ribosomal protein</keyword>
<keyword id="KW-0694">RNA-binding</keyword>
<keyword id="KW-0699">rRNA-binding</keyword>
<comment type="function">
    <text evidence="1">One of the primary rRNA binding proteins, it binds directly to 16S rRNA where it nucleates assembly of the body of the 30S subunit.</text>
</comment>
<comment type="function">
    <text evidence="1">With S5 and S12 plays an important role in translational accuracy.</text>
</comment>
<comment type="subunit">
    <text evidence="1">Part of the 30S ribosomal subunit. Contacts protein S5. The interaction surface between S4 and S5 is involved in control of translational fidelity (By similarity).</text>
</comment>
<comment type="subcellular location">
    <subcellularLocation>
        <location>Plastid</location>
        <location>Chloroplast</location>
    </subcellularLocation>
</comment>
<comment type="similarity">
    <text evidence="3">Belongs to the universal ribosomal protein uS4 family.</text>
</comment>
<gene>
    <name type="primary">rps4</name>
</gene>
<organism>
    <name type="scientific">Tragus racemosus</name>
    <name type="common">Carrot grass</name>
    <name type="synonym">Cenchrus racemosus</name>
    <dbReference type="NCBI Taxonomy" id="29708"/>
    <lineage>
        <taxon>Eukaryota</taxon>
        <taxon>Viridiplantae</taxon>
        <taxon>Streptophyta</taxon>
        <taxon>Embryophyta</taxon>
        <taxon>Tracheophyta</taxon>
        <taxon>Spermatophyta</taxon>
        <taxon>Magnoliopsida</taxon>
        <taxon>Liliopsida</taxon>
        <taxon>Poales</taxon>
        <taxon>Poaceae</taxon>
        <taxon>PACMAD clade</taxon>
        <taxon>Chloridoideae</taxon>
        <taxon>Cynodonteae</taxon>
        <taxon>Boutelouodinae</taxon>
        <taxon>Traginae</taxon>
        <taxon>Tragus</taxon>
    </lineage>
</organism>
<dbReference type="EMBL" id="Z29252">
    <property type="protein sequence ID" value="CAA82451.1"/>
    <property type="molecule type" value="Genomic_DNA"/>
</dbReference>
<dbReference type="PIR" id="S41283">
    <property type="entry name" value="S41283"/>
</dbReference>
<dbReference type="SMR" id="P36473"/>
<dbReference type="GO" id="GO:0009507">
    <property type="term" value="C:chloroplast"/>
    <property type="evidence" value="ECO:0007669"/>
    <property type="project" value="UniProtKB-SubCell"/>
</dbReference>
<dbReference type="GO" id="GO:0015935">
    <property type="term" value="C:small ribosomal subunit"/>
    <property type="evidence" value="ECO:0007669"/>
    <property type="project" value="InterPro"/>
</dbReference>
<dbReference type="GO" id="GO:0019843">
    <property type="term" value="F:rRNA binding"/>
    <property type="evidence" value="ECO:0007669"/>
    <property type="project" value="UniProtKB-KW"/>
</dbReference>
<dbReference type="GO" id="GO:0003735">
    <property type="term" value="F:structural constituent of ribosome"/>
    <property type="evidence" value="ECO:0007669"/>
    <property type="project" value="InterPro"/>
</dbReference>
<dbReference type="GO" id="GO:0042274">
    <property type="term" value="P:ribosomal small subunit biogenesis"/>
    <property type="evidence" value="ECO:0007669"/>
    <property type="project" value="TreeGrafter"/>
</dbReference>
<dbReference type="GO" id="GO:0006412">
    <property type="term" value="P:translation"/>
    <property type="evidence" value="ECO:0007669"/>
    <property type="project" value="InterPro"/>
</dbReference>
<dbReference type="CDD" id="cd00165">
    <property type="entry name" value="S4"/>
    <property type="match status" value="1"/>
</dbReference>
<dbReference type="FunFam" id="1.10.1050.10:FF:000002">
    <property type="entry name" value="30S ribosomal protein S4, chloroplastic"/>
    <property type="match status" value="1"/>
</dbReference>
<dbReference type="FunFam" id="3.10.290.10:FF:000081">
    <property type="entry name" value="30S ribosomal protein S4, chloroplastic"/>
    <property type="match status" value="1"/>
</dbReference>
<dbReference type="Gene3D" id="1.10.1050.10">
    <property type="entry name" value="Ribosomal Protein S4 Delta 41, Chain A, domain 1"/>
    <property type="match status" value="1"/>
</dbReference>
<dbReference type="Gene3D" id="3.10.290.10">
    <property type="entry name" value="RNA-binding S4 domain"/>
    <property type="match status" value="1"/>
</dbReference>
<dbReference type="HAMAP" id="MF_01306_B">
    <property type="entry name" value="Ribosomal_uS4_B"/>
    <property type="match status" value="1"/>
</dbReference>
<dbReference type="InterPro" id="IPR022801">
    <property type="entry name" value="Ribosomal_uS4"/>
</dbReference>
<dbReference type="InterPro" id="IPR005709">
    <property type="entry name" value="Ribosomal_uS4_bac-type"/>
</dbReference>
<dbReference type="InterPro" id="IPR018079">
    <property type="entry name" value="Ribosomal_uS4_CS"/>
</dbReference>
<dbReference type="InterPro" id="IPR001912">
    <property type="entry name" value="Ribosomal_uS4_N"/>
</dbReference>
<dbReference type="InterPro" id="IPR002942">
    <property type="entry name" value="S4_RNA-bd"/>
</dbReference>
<dbReference type="InterPro" id="IPR036986">
    <property type="entry name" value="S4_RNA-bd_sf"/>
</dbReference>
<dbReference type="NCBIfam" id="NF003717">
    <property type="entry name" value="PRK05327.1"/>
    <property type="match status" value="1"/>
</dbReference>
<dbReference type="NCBIfam" id="TIGR01017">
    <property type="entry name" value="rpsD_bact"/>
    <property type="match status" value="1"/>
</dbReference>
<dbReference type="PANTHER" id="PTHR11831">
    <property type="entry name" value="30S 40S RIBOSOMAL PROTEIN"/>
    <property type="match status" value="1"/>
</dbReference>
<dbReference type="PANTHER" id="PTHR11831:SF4">
    <property type="entry name" value="SMALL RIBOSOMAL SUBUNIT PROTEIN US4M"/>
    <property type="match status" value="1"/>
</dbReference>
<dbReference type="Pfam" id="PF00163">
    <property type="entry name" value="Ribosomal_S4"/>
    <property type="match status" value="1"/>
</dbReference>
<dbReference type="Pfam" id="PF01479">
    <property type="entry name" value="S4"/>
    <property type="match status" value="1"/>
</dbReference>
<dbReference type="SMART" id="SM01390">
    <property type="entry name" value="Ribosomal_S4"/>
    <property type="match status" value="1"/>
</dbReference>
<dbReference type="SMART" id="SM00363">
    <property type="entry name" value="S4"/>
    <property type="match status" value="1"/>
</dbReference>
<dbReference type="SUPFAM" id="SSF55174">
    <property type="entry name" value="Alpha-L RNA-binding motif"/>
    <property type="match status" value="1"/>
</dbReference>
<dbReference type="PROSITE" id="PS00632">
    <property type="entry name" value="RIBOSOMAL_S4"/>
    <property type="match status" value="1"/>
</dbReference>
<dbReference type="PROSITE" id="PS50889">
    <property type="entry name" value="S4"/>
    <property type="match status" value="1"/>
</dbReference>
<reference key="1">
    <citation type="journal article" date="1994" name="Plant Syst. Evol.">
        <title>The chloroplast gene rps4 as a tool for the study of Poaceae phylogeny.</title>
        <authorList>
            <person name="Nadot S."/>
            <person name="Bajon R."/>
            <person name="Lejeune B."/>
        </authorList>
        <dbReference type="AGRICOLA" id="IND20417698"/>
    </citation>
    <scope>NUCLEOTIDE SEQUENCE [GENOMIC DNA]</scope>
</reference>
<feature type="chain" id="PRO_0000132675" description="Small ribosomal subunit protein uS4c">
    <location>
        <begin position="1"/>
        <end position="196" status="greater than"/>
    </location>
</feature>
<feature type="domain" description="S4 RNA-binding">
    <location>
        <begin position="89"/>
        <end position="150"/>
    </location>
</feature>
<feature type="region of interest" description="Disordered" evidence="2">
    <location>
        <begin position="17"/>
        <end position="36"/>
    </location>
</feature>
<feature type="non-terminal residue">
    <location>
        <position position="196"/>
    </location>
</feature>
<accession>P36473</accession>
<protein>
    <recommendedName>
        <fullName evidence="3">Small ribosomal subunit protein uS4c</fullName>
    </recommendedName>
    <alternativeName>
        <fullName>30S ribosomal protein S4, chloroplastic</fullName>
    </alternativeName>
</protein>
<geneLocation type="chloroplast"/>